<feature type="chain" id="PRO_1000092862" description="Acetylglutamate kinase">
    <location>
        <begin position="1"/>
        <end position="287"/>
    </location>
</feature>
<feature type="binding site" evidence="1">
    <location>
        <begin position="64"/>
        <end position="65"/>
    </location>
    <ligand>
        <name>substrate</name>
    </ligand>
</feature>
<feature type="binding site" evidence="1">
    <location>
        <position position="86"/>
    </location>
    <ligand>
        <name>substrate</name>
    </ligand>
</feature>
<feature type="binding site" evidence="1">
    <location>
        <position position="185"/>
    </location>
    <ligand>
        <name>substrate</name>
    </ligand>
</feature>
<feature type="site" description="Transition state stabilizer" evidence="1">
    <location>
        <position position="29"/>
    </location>
</feature>
<feature type="site" description="Transition state stabilizer" evidence="1">
    <location>
        <position position="245"/>
    </location>
</feature>
<keyword id="KW-0028">Amino-acid biosynthesis</keyword>
<keyword id="KW-0055">Arginine biosynthesis</keyword>
<keyword id="KW-0067">ATP-binding</keyword>
<keyword id="KW-0963">Cytoplasm</keyword>
<keyword id="KW-0418">Kinase</keyword>
<keyword id="KW-0547">Nucleotide-binding</keyword>
<keyword id="KW-0808">Transferase</keyword>
<reference key="1">
    <citation type="journal article" date="2009" name="J. Bacteriol.">
        <title>Complete and draft genome sequences of six members of the Aquificales.</title>
        <authorList>
            <person name="Reysenbach A.-L."/>
            <person name="Hamamura N."/>
            <person name="Podar M."/>
            <person name="Griffiths E."/>
            <person name="Ferreira S."/>
            <person name="Hochstein R."/>
            <person name="Heidelberg J."/>
            <person name="Johnson J."/>
            <person name="Mead D."/>
            <person name="Pohorille A."/>
            <person name="Sarmiento M."/>
            <person name="Schweighofer K."/>
            <person name="Seshadri R."/>
            <person name="Voytek M.A."/>
        </authorList>
    </citation>
    <scope>NUCLEOTIDE SEQUENCE [LARGE SCALE GENOMIC DNA]</scope>
    <source>
        <strain>Y04AAS1</strain>
    </source>
</reference>
<gene>
    <name evidence="1" type="primary">argB</name>
    <name type="ordered locus">HY04AAS1_0327</name>
</gene>
<dbReference type="EC" id="2.7.2.8" evidence="1"/>
<dbReference type="EMBL" id="CP001130">
    <property type="protein sequence ID" value="ACG57017.1"/>
    <property type="molecule type" value="Genomic_DNA"/>
</dbReference>
<dbReference type="RefSeq" id="WP_012513373.1">
    <property type="nucleotide sequence ID" value="NC_011126.1"/>
</dbReference>
<dbReference type="SMR" id="B4U7A6"/>
<dbReference type="STRING" id="380749.HY04AAS1_0327"/>
<dbReference type="KEGG" id="hya:HY04AAS1_0327"/>
<dbReference type="eggNOG" id="COG0548">
    <property type="taxonomic scope" value="Bacteria"/>
</dbReference>
<dbReference type="HOGENOM" id="CLU_053680_0_0_0"/>
<dbReference type="OrthoDB" id="9803155at2"/>
<dbReference type="UniPathway" id="UPA00068">
    <property type="reaction ID" value="UER00107"/>
</dbReference>
<dbReference type="GO" id="GO:0005737">
    <property type="term" value="C:cytoplasm"/>
    <property type="evidence" value="ECO:0007669"/>
    <property type="project" value="UniProtKB-SubCell"/>
</dbReference>
<dbReference type="GO" id="GO:0003991">
    <property type="term" value="F:acetylglutamate kinase activity"/>
    <property type="evidence" value="ECO:0007669"/>
    <property type="project" value="UniProtKB-UniRule"/>
</dbReference>
<dbReference type="GO" id="GO:0005524">
    <property type="term" value="F:ATP binding"/>
    <property type="evidence" value="ECO:0007669"/>
    <property type="project" value="UniProtKB-UniRule"/>
</dbReference>
<dbReference type="GO" id="GO:0042450">
    <property type="term" value="P:arginine biosynthetic process via ornithine"/>
    <property type="evidence" value="ECO:0007669"/>
    <property type="project" value="UniProtKB-UniRule"/>
</dbReference>
<dbReference type="GO" id="GO:0006526">
    <property type="term" value="P:L-arginine biosynthetic process"/>
    <property type="evidence" value="ECO:0007669"/>
    <property type="project" value="UniProtKB-UniPathway"/>
</dbReference>
<dbReference type="CDD" id="cd04250">
    <property type="entry name" value="AAK_NAGK-C"/>
    <property type="match status" value="1"/>
</dbReference>
<dbReference type="FunFam" id="3.40.1160.10:FF:000004">
    <property type="entry name" value="Acetylglutamate kinase"/>
    <property type="match status" value="1"/>
</dbReference>
<dbReference type="Gene3D" id="3.40.1160.10">
    <property type="entry name" value="Acetylglutamate kinase-like"/>
    <property type="match status" value="1"/>
</dbReference>
<dbReference type="HAMAP" id="MF_00082">
    <property type="entry name" value="ArgB"/>
    <property type="match status" value="1"/>
</dbReference>
<dbReference type="InterPro" id="IPR036393">
    <property type="entry name" value="AceGlu_kinase-like_sf"/>
</dbReference>
<dbReference type="InterPro" id="IPR004662">
    <property type="entry name" value="AcgluKinase_fam"/>
</dbReference>
<dbReference type="InterPro" id="IPR037528">
    <property type="entry name" value="ArgB"/>
</dbReference>
<dbReference type="InterPro" id="IPR001048">
    <property type="entry name" value="Asp/Glu/Uridylate_kinase"/>
</dbReference>
<dbReference type="InterPro" id="IPR001057">
    <property type="entry name" value="Glu/AcGlu_kinase"/>
</dbReference>
<dbReference type="InterPro" id="IPR041727">
    <property type="entry name" value="NAGK-C"/>
</dbReference>
<dbReference type="NCBIfam" id="TIGR00761">
    <property type="entry name" value="argB"/>
    <property type="match status" value="1"/>
</dbReference>
<dbReference type="PANTHER" id="PTHR23342">
    <property type="entry name" value="N-ACETYLGLUTAMATE SYNTHASE"/>
    <property type="match status" value="1"/>
</dbReference>
<dbReference type="PANTHER" id="PTHR23342:SF0">
    <property type="entry name" value="N-ACETYLGLUTAMATE SYNTHASE, MITOCHONDRIAL"/>
    <property type="match status" value="1"/>
</dbReference>
<dbReference type="Pfam" id="PF00696">
    <property type="entry name" value="AA_kinase"/>
    <property type="match status" value="1"/>
</dbReference>
<dbReference type="PIRSF" id="PIRSF000728">
    <property type="entry name" value="NAGK"/>
    <property type="match status" value="1"/>
</dbReference>
<dbReference type="PRINTS" id="PR00474">
    <property type="entry name" value="GLU5KINASE"/>
</dbReference>
<dbReference type="SUPFAM" id="SSF53633">
    <property type="entry name" value="Carbamate kinase-like"/>
    <property type="match status" value="1"/>
</dbReference>
<comment type="function">
    <text evidence="1">Catalyzes the ATP-dependent phosphorylation of N-acetyl-L-glutamate.</text>
</comment>
<comment type="catalytic activity">
    <reaction evidence="1">
        <text>N-acetyl-L-glutamate + ATP = N-acetyl-L-glutamyl 5-phosphate + ADP</text>
        <dbReference type="Rhea" id="RHEA:14629"/>
        <dbReference type="ChEBI" id="CHEBI:30616"/>
        <dbReference type="ChEBI" id="CHEBI:44337"/>
        <dbReference type="ChEBI" id="CHEBI:57936"/>
        <dbReference type="ChEBI" id="CHEBI:456216"/>
        <dbReference type="EC" id="2.7.2.8"/>
    </reaction>
</comment>
<comment type="pathway">
    <text evidence="1">Amino-acid biosynthesis; L-arginine biosynthesis; N(2)-acetyl-L-ornithine from L-glutamate: step 2/4.</text>
</comment>
<comment type="subcellular location">
    <subcellularLocation>
        <location evidence="1">Cytoplasm</location>
    </subcellularLocation>
</comment>
<comment type="similarity">
    <text evidence="1">Belongs to the acetylglutamate kinase family. ArgB subfamily.</text>
</comment>
<sequence length="287" mass="31769">MEQLLEKALILQEALPFIRDFYGKVFVVKYGGAAMEEEELKHSFAKDIALLRYVGIKVVLVHGGGKDITNMLNKLNIQTEFINGIRKTDKESLDVARMVLIGKLNKDIVSMLNKEMSNMHGAIGLSGIDANLLICTKYYQDGEDIGYVGKVKTVNTKLIRELIQMDYTPVIAPIGIDPESNQMYNVNADMAATEIACELGAEKLIFLTDTDGILDKSGKTISSIHKNQYKELIEDGTITKGMIPKINSAIDAILRGVRKVHIINGKIKHSILIEVFTKEGIGTEISL</sequence>
<evidence type="ECO:0000255" key="1">
    <source>
        <dbReference type="HAMAP-Rule" id="MF_00082"/>
    </source>
</evidence>
<proteinExistence type="inferred from homology"/>
<name>ARGB_HYDS0</name>
<accession>B4U7A6</accession>
<protein>
    <recommendedName>
        <fullName evidence="1">Acetylglutamate kinase</fullName>
        <ecNumber evidence="1">2.7.2.8</ecNumber>
    </recommendedName>
    <alternativeName>
        <fullName evidence="1">N-acetyl-L-glutamate 5-phosphotransferase</fullName>
    </alternativeName>
    <alternativeName>
        <fullName evidence="1">NAG kinase</fullName>
        <shortName evidence="1">NAGK</shortName>
    </alternativeName>
</protein>
<organism>
    <name type="scientific">Hydrogenobaculum sp. (strain Y04AAS1)</name>
    <dbReference type="NCBI Taxonomy" id="380749"/>
    <lineage>
        <taxon>Bacteria</taxon>
        <taxon>Pseudomonadati</taxon>
        <taxon>Aquificota</taxon>
        <taxon>Aquificia</taxon>
        <taxon>Aquificales</taxon>
        <taxon>Aquificaceae</taxon>
        <taxon>Hydrogenobaculum</taxon>
    </lineage>
</organism>